<dbReference type="EMBL" id="CP000410">
    <property type="protein sequence ID" value="ABJ54095.1"/>
    <property type="molecule type" value="Genomic_DNA"/>
</dbReference>
<dbReference type="RefSeq" id="WP_000146522.1">
    <property type="nucleotide sequence ID" value="NZ_JAMLJR010000016.1"/>
</dbReference>
<dbReference type="SMR" id="Q04M95"/>
<dbReference type="PaxDb" id="373153-SPD_0339"/>
<dbReference type="GeneID" id="45652165"/>
<dbReference type="KEGG" id="spd:SPD_0339"/>
<dbReference type="eggNOG" id="COG3599">
    <property type="taxonomic scope" value="Bacteria"/>
</dbReference>
<dbReference type="HOGENOM" id="CLU_140309_1_0_9"/>
<dbReference type="Proteomes" id="UP000001452">
    <property type="component" value="Chromosome"/>
</dbReference>
<dbReference type="GO" id="GO:0005737">
    <property type="term" value="C:cytoplasm"/>
    <property type="evidence" value="ECO:0007669"/>
    <property type="project" value="UniProtKB-SubCell"/>
</dbReference>
<dbReference type="GO" id="GO:0051301">
    <property type="term" value="P:cell division"/>
    <property type="evidence" value="ECO:0007669"/>
    <property type="project" value="UniProtKB-UniRule"/>
</dbReference>
<dbReference type="GO" id="GO:0008360">
    <property type="term" value="P:regulation of cell shape"/>
    <property type="evidence" value="ECO:0007669"/>
    <property type="project" value="UniProtKB-UniRule"/>
</dbReference>
<dbReference type="Gene3D" id="6.10.250.660">
    <property type="match status" value="1"/>
</dbReference>
<dbReference type="HAMAP" id="MF_02011">
    <property type="entry name" value="GpsB"/>
    <property type="match status" value="1"/>
</dbReference>
<dbReference type="InterPro" id="IPR011229">
    <property type="entry name" value="Cell_cycle_GpsB"/>
</dbReference>
<dbReference type="InterPro" id="IPR019933">
    <property type="entry name" value="DivIVA_domain"/>
</dbReference>
<dbReference type="InterPro" id="IPR007793">
    <property type="entry name" value="DivIVA_fam"/>
</dbReference>
<dbReference type="NCBIfam" id="TIGR03544">
    <property type="entry name" value="DivI1A_domain"/>
    <property type="match status" value="1"/>
</dbReference>
<dbReference type="NCBIfam" id="NF010725">
    <property type="entry name" value="PRK14127.1"/>
    <property type="match status" value="1"/>
</dbReference>
<dbReference type="PANTHER" id="PTHR35794:SF1">
    <property type="entry name" value="CELL CYCLE PROTEIN GPSB"/>
    <property type="match status" value="1"/>
</dbReference>
<dbReference type="PANTHER" id="PTHR35794">
    <property type="entry name" value="CELL DIVISION PROTEIN DIVIVA"/>
    <property type="match status" value="1"/>
</dbReference>
<dbReference type="Pfam" id="PF05103">
    <property type="entry name" value="DivIVA"/>
    <property type="match status" value="1"/>
</dbReference>
<dbReference type="PIRSF" id="PIRSF029938">
    <property type="entry name" value="UCP029938"/>
    <property type="match status" value="1"/>
</dbReference>
<gene>
    <name evidence="1" type="primary">gpsB</name>
    <name type="ordered locus">SPD_0339</name>
</gene>
<comment type="function">
    <text evidence="1">Divisome component that associates with the complex late in its assembly, after the Z-ring is formed, and is dependent on DivIC and PBP2B for its recruitment to the divisome. Together with EzrA, is a key component of the system that regulates PBP1 localization during cell cycle progression. Its main role could be the removal of PBP1 from the cell pole after pole maturation is completed. Also contributes to the recruitment of PBP1 to the division complex. Not essential for septum formation.</text>
</comment>
<comment type="subunit">
    <text evidence="1">Forms polymers through the coiled coil domains. Interacts with PBP1, MreC and EzrA.</text>
</comment>
<comment type="subcellular location">
    <subcellularLocation>
        <location evidence="1">Cytoplasm</location>
    </subcellularLocation>
    <text evidence="1">Shuttles between the lateral wall and the division site in a cell cycle-dependent manner.</text>
</comment>
<comment type="similarity">
    <text evidence="1">Belongs to the GpsB family.</text>
</comment>
<evidence type="ECO:0000255" key="1">
    <source>
        <dbReference type="HAMAP-Rule" id="MF_02011"/>
    </source>
</evidence>
<sequence>MASIIFSAKDIFEQEFGREVRGYNKVEVDEFLDDVIKDYETYAALVKSLRQEIADLKEELTRKPKPSPVQAEPLEAAITSSMTNFDILKRLNRLEKEVFGKQILDNSDF</sequence>
<name>GPSB_STRP2</name>
<accession>Q04M95</accession>
<feature type="chain" id="PRO_0000337955" description="Cell cycle protein GpsB">
    <location>
        <begin position="1"/>
        <end position="109"/>
    </location>
</feature>
<feature type="coiled-coil region" evidence="1">
    <location>
        <begin position="36"/>
        <end position="63"/>
    </location>
</feature>
<reference key="1">
    <citation type="journal article" date="2007" name="J. Bacteriol.">
        <title>Genome sequence of Avery's virulent serotype 2 strain D39 of Streptococcus pneumoniae and comparison with that of unencapsulated laboratory strain R6.</title>
        <authorList>
            <person name="Lanie J.A."/>
            <person name="Ng W.-L."/>
            <person name="Kazmierczak K.M."/>
            <person name="Andrzejewski T.M."/>
            <person name="Davidsen T.M."/>
            <person name="Wayne K.J."/>
            <person name="Tettelin H."/>
            <person name="Glass J.I."/>
            <person name="Winkler M.E."/>
        </authorList>
    </citation>
    <scope>NUCLEOTIDE SEQUENCE [LARGE SCALE GENOMIC DNA]</scope>
    <source>
        <strain>D39 / NCTC 7466</strain>
    </source>
</reference>
<keyword id="KW-0131">Cell cycle</keyword>
<keyword id="KW-0132">Cell division</keyword>
<keyword id="KW-0133">Cell shape</keyword>
<keyword id="KW-0175">Coiled coil</keyword>
<keyword id="KW-0963">Cytoplasm</keyword>
<keyword id="KW-1185">Reference proteome</keyword>
<proteinExistence type="inferred from homology"/>
<organism>
    <name type="scientific">Streptococcus pneumoniae serotype 2 (strain D39 / NCTC 7466)</name>
    <dbReference type="NCBI Taxonomy" id="373153"/>
    <lineage>
        <taxon>Bacteria</taxon>
        <taxon>Bacillati</taxon>
        <taxon>Bacillota</taxon>
        <taxon>Bacilli</taxon>
        <taxon>Lactobacillales</taxon>
        <taxon>Streptococcaceae</taxon>
        <taxon>Streptococcus</taxon>
    </lineage>
</organism>
<protein>
    <recommendedName>
        <fullName evidence="1">Cell cycle protein GpsB</fullName>
    </recommendedName>
    <alternativeName>
        <fullName evidence="1">Guiding PBP1-shuttling protein</fullName>
    </alternativeName>
</protein>